<name>EFG_CHLPD</name>
<dbReference type="EMBL" id="CP000492">
    <property type="protein sequence ID" value="ABL66414.1"/>
    <property type="molecule type" value="Genomic_DNA"/>
</dbReference>
<dbReference type="RefSeq" id="WP_011746196.1">
    <property type="nucleotide sequence ID" value="NC_008639.1"/>
</dbReference>
<dbReference type="SMR" id="A1BJ37"/>
<dbReference type="STRING" id="290317.Cpha266_2426"/>
<dbReference type="KEGG" id="cph:Cpha266_2426"/>
<dbReference type="eggNOG" id="COG0480">
    <property type="taxonomic scope" value="Bacteria"/>
</dbReference>
<dbReference type="HOGENOM" id="CLU_002794_4_1_10"/>
<dbReference type="OrthoDB" id="9801591at2"/>
<dbReference type="Proteomes" id="UP000008701">
    <property type="component" value="Chromosome"/>
</dbReference>
<dbReference type="GO" id="GO:0005737">
    <property type="term" value="C:cytoplasm"/>
    <property type="evidence" value="ECO:0007669"/>
    <property type="project" value="UniProtKB-SubCell"/>
</dbReference>
<dbReference type="GO" id="GO:0005525">
    <property type="term" value="F:GTP binding"/>
    <property type="evidence" value="ECO:0007669"/>
    <property type="project" value="UniProtKB-UniRule"/>
</dbReference>
<dbReference type="GO" id="GO:0003924">
    <property type="term" value="F:GTPase activity"/>
    <property type="evidence" value="ECO:0007669"/>
    <property type="project" value="InterPro"/>
</dbReference>
<dbReference type="GO" id="GO:0003746">
    <property type="term" value="F:translation elongation factor activity"/>
    <property type="evidence" value="ECO:0007669"/>
    <property type="project" value="UniProtKB-UniRule"/>
</dbReference>
<dbReference type="GO" id="GO:0032790">
    <property type="term" value="P:ribosome disassembly"/>
    <property type="evidence" value="ECO:0007669"/>
    <property type="project" value="TreeGrafter"/>
</dbReference>
<dbReference type="CDD" id="cd01886">
    <property type="entry name" value="EF-G"/>
    <property type="match status" value="1"/>
</dbReference>
<dbReference type="CDD" id="cd16262">
    <property type="entry name" value="EFG_III"/>
    <property type="match status" value="1"/>
</dbReference>
<dbReference type="CDD" id="cd01434">
    <property type="entry name" value="EFG_mtEFG1_IV"/>
    <property type="match status" value="1"/>
</dbReference>
<dbReference type="CDD" id="cd03713">
    <property type="entry name" value="EFG_mtEFG_C"/>
    <property type="match status" value="1"/>
</dbReference>
<dbReference type="CDD" id="cd04088">
    <property type="entry name" value="EFG_mtEFG_II"/>
    <property type="match status" value="1"/>
</dbReference>
<dbReference type="FunFam" id="2.40.30.10:FF:000006">
    <property type="entry name" value="Elongation factor G"/>
    <property type="match status" value="1"/>
</dbReference>
<dbReference type="FunFam" id="3.30.230.10:FF:000003">
    <property type="entry name" value="Elongation factor G"/>
    <property type="match status" value="1"/>
</dbReference>
<dbReference type="FunFam" id="3.30.70.240:FF:000001">
    <property type="entry name" value="Elongation factor G"/>
    <property type="match status" value="1"/>
</dbReference>
<dbReference type="FunFam" id="3.30.70.870:FF:000001">
    <property type="entry name" value="Elongation factor G"/>
    <property type="match status" value="1"/>
</dbReference>
<dbReference type="FunFam" id="3.40.50.300:FF:000029">
    <property type="entry name" value="Elongation factor G"/>
    <property type="match status" value="1"/>
</dbReference>
<dbReference type="Gene3D" id="3.30.230.10">
    <property type="match status" value="1"/>
</dbReference>
<dbReference type="Gene3D" id="3.30.70.240">
    <property type="match status" value="1"/>
</dbReference>
<dbReference type="Gene3D" id="3.30.70.870">
    <property type="entry name" value="Elongation Factor G (Translational Gtpase), domain 3"/>
    <property type="match status" value="1"/>
</dbReference>
<dbReference type="Gene3D" id="3.40.50.300">
    <property type="entry name" value="P-loop containing nucleotide triphosphate hydrolases"/>
    <property type="match status" value="1"/>
</dbReference>
<dbReference type="Gene3D" id="2.40.30.10">
    <property type="entry name" value="Translation factors"/>
    <property type="match status" value="1"/>
</dbReference>
<dbReference type="HAMAP" id="MF_00054_B">
    <property type="entry name" value="EF_G_EF_2_B"/>
    <property type="match status" value="1"/>
</dbReference>
<dbReference type="InterPro" id="IPR041095">
    <property type="entry name" value="EFG_II"/>
</dbReference>
<dbReference type="InterPro" id="IPR009022">
    <property type="entry name" value="EFG_III"/>
</dbReference>
<dbReference type="InterPro" id="IPR035647">
    <property type="entry name" value="EFG_III/V"/>
</dbReference>
<dbReference type="InterPro" id="IPR047872">
    <property type="entry name" value="EFG_IV"/>
</dbReference>
<dbReference type="InterPro" id="IPR035649">
    <property type="entry name" value="EFG_V"/>
</dbReference>
<dbReference type="InterPro" id="IPR000640">
    <property type="entry name" value="EFG_V-like"/>
</dbReference>
<dbReference type="InterPro" id="IPR004161">
    <property type="entry name" value="EFTu-like_2"/>
</dbReference>
<dbReference type="InterPro" id="IPR031157">
    <property type="entry name" value="G_TR_CS"/>
</dbReference>
<dbReference type="InterPro" id="IPR027417">
    <property type="entry name" value="P-loop_NTPase"/>
</dbReference>
<dbReference type="InterPro" id="IPR020568">
    <property type="entry name" value="Ribosomal_Su5_D2-typ_SF"/>
</dbReference>
<dbReference type="InterPro" id="IPR014721">
    <property type="entry name" value="Ribsml_uS5_D2-typ_fold_subgr"/>
</dbReference>
<dbReference type="InterPro" id="IPR005225">
    <property type="entry name" value="Small_GTP-bd"/>
</dbReference>
<dbReference type="InterPro" id="IPR000795">
    <property type="entry name" value="T_Tr_GTP-bd_dom"/>
</dbReference>
<dbReference type="InterPro" id="IPR009000">
    <property type="entry name" value="Transl_B-barrel_sf"/>
</dbReference>
<dbReference type="InterPro" id="IPR004540">
    <property type="entry name" value="Transl_elong_EFG/EF2"/>
</dbReference>
<dbReference type="InterPro" id="IPR005517">
    <property type="entry name" value="Transl_elong_EFG/EF2_IV"/>
</dbReference>
<dbReference type="NCBIfam" id="TIGR00484">
    <property type="entry name" value="EF-G"/>
    <property type="match status" value="1"/>
</dbReference>
<dbReference type="NCBIfam" id="NF009381">
    <property type="entry name" value="PRK12740.1-5"/>
    <property type="match status" value="1"/>
</dbReference>
<dbReference type="NCBIfam" id="TIGR00231">
    <property type="entry name" value="small_GTP"/>
    <property type="match status" value="1"/>
</dbReference>
<dbReference type="PANTHER" id="PTHR43261:SF1">
    <property type="entry name" value="RIBOSOME-RELEASING FACTOR 2, MITOCHONDRIAL"/>
    <property type="match status" value="1"/>
</dbReference>
<dbReference type="PANTHER" id="PTHR43261">
    <property type="entry name" value="TRANSLATION ELONGATION FACTOR G-RELATED"/>
    <property type="match status" value="1"/>
</dbReference>
<dbReference type="Pfam" id="PF00679">
    <property type="entry name" value="EFG_C"/>
    <property type="match status" value="1"/>
</dbReference>
<dbReference type="Pfam" id="PF14492">
    <property type="entry name" value="EFG_III"/>
    <property type="match status" value="1"/>
</dbReference>
<dbReference type="Pfam" id="PF03764">
    <property type="entry name" value="EFG_IV"/>
    <property type="match status" value="1"/>
</dbReference>
<dbReference type="Pfam" id="PF00009">
    <property type="entry name" value="GTP_EFTU"/>
    <property type="match status" value="1"/>
</dbReference>
<dbReference type="Pfam" id="PF03144">
    <property type="entry name" value="GTP_EFTU_D2"/>
    <property type="match status" value="1"/>
</dbReference>
<dbReference type="PRINTS" id="PR00315">
    <property type="entry name" value="ELONGATNFCT"/>
</dbReference>
<dbReference type="SMART" id="SM00838">
    <property type="entry name" value="EFG_C"/>
    <property type="match status" value="1"/>
</dbReference>
<dbReference type="SMART" id="SM00889">
    <property type="entry name" value="EFG_IV"/>
    <property type="match status" value="1"/>
</dbReference>
<dbReference type="SUPFAM" id="SSF54980">
    <property type="entry name" value="EF-G C-terminal domain-like"/>
    <property type="match status" value="2"/>
</dbReference>
<dbReference type="SUPFAM" id="SSF52540">
    <property type="entry name" value="P-loop containing nucleoside triphosphate hydrolases"/>
    <property type="match status" value="1"/>
</dbReference>
<dbReference type="SUPFAM" id="SSF54211">
    <property type="entry name" value="Ribosomal protein S5 domain 2-like"/>
    <property type="match status" value="1"/>
</dbReference>
<dbReference type="SUPFAM" id="SSF50447">
    <property type="entry name" value="Translation proteins"/>
    <property type="match status" value="1"/>
</dbReference>
<dbReference type="PROSITE" id="PS00301">
    <property type="entry name" value="G_TR_1"/>
    <property type="match status" value="1"/>
</dbReference>
<dbReference type="PROSITE" id="PS51722">
    <property type="entry name" value="G_TR_2"/>
    <property type="match status" value="1"/>
</dbReference>
<organism>
    <name type="scientific">Chlorobium phaeobacteroides (strain DSM 266 / SMG 266 / 2430)</name>
    <dbReference type="NCBI Taxonomy" id="290317"/>
    <lineage>
        <taxon>Bacteria</taxon>
        <taxon>Pseudomonadati</taxon>
        <taxon>Chlorobiota</taxon>
        <taxon>Chlorobiia</taxon>
        <taxon>Chlorobiales</taxon>
        <taxon>Chlorobiaceae</taxon>
        <taxon>Chlorobium/Pelodictyon group</taxon>
        <taxon>Chlorobium</taxon>
    </lineage>
</organism>
<reference key="1">
    <citation type="submission" date="2006-12" db="EMBL/GenBank/DDBJ databases">
        <title>Complete sequence of Chlorobium phaeobacteroides DSM 266.</title>
        <authorList>
            <consortium name="US DOE Joint Genome Institute"/>
            <person name="Copeland A."/>
            <person name="Lucas S."/>
            <person name="Lapidus A."/>
            <person name="Barry K."/>
            <person name="Detter J.C."/>
            <person name="Glavina del Rio T."/>
            <person name="Hammon N."/>
            <person name="Israni S."/>
            <person name="Pitluck S."/>
            <person name="Goltsman E."/>
            <person name="Schmutz J."/>
            <person name="Larimer F."/>
            <person name="Land M."/>
            <person name="Hauser L."/>
            <person name="Mikhailova N."/>
            <person name="Li T."/>
            <person name="Overmann J."/>
            <person name="Bryant D.A."/>
            <person name="Richardson P."/>
        </authorList>
    </citation>
    <scope>NUCLEOTIDE SEQUENCE [LARGE SCALE GENOMIC DNA]</scope>
    <source>
        <strain>DSM 266 / SMG 266 / 2430</strain>
    </source>
</reference>
<feature type="chain" id="PRO_1000008814" description="Elongation factor G">
    <location>
        <begin position="1"/>
        <end position="704"/>
    </location>
</feature>
<feature type="domain" description="tr-type G">
    <location>
        <begin position="8"/>
        <end position="291"/>
    </location>
</feature>
<feature type="binding site" evidence="1">
    <location>
        <begin position="17"/>
        <end position="24"/>
    </location>
    <ligand>
        <name>GTP</name>
        <dbReference type="ChEBI" id="CHEBI:37565"/>
    </ligand>
</feature>
<feature type="binding site" evidence="1">
    <location>
        <begin position="90"/>
        <end position="94"/>
    </location>
    <ligand>
        <name>GTP</name>
        <dbReference type="ChEBI" id="CHEBI:37565"/>
    </ligand>
</feature>
<feature type="binding site" evidence="1">
    <location>
        <begin position="144"/>
        <end position="147"/>
    </location>
    <ligand>
        <name>GTP</name>
        <dbReference type="ChEBI" id="CHEBI:37565"/>
    </ligand>
</feature>
<evidence type="ECO:0000255" key="1">
    <source>
        <dbReference type="HAMAP-Rule" id="MF_00054"/>
    </source>
</evidence>
<sequence>MARLVALDKVRNIGIMAHIDAGKTTTTERILYYTGRLHRMGEVHEGGATMDWMEQEKERGITITSAATTCFWSPNYGNYSGLRHRINIIDTPGHVDFTVEVERSLRVLDGAVALFCAVGGVEPQSETVWRQANKYGVPRIAYVNKMDRTGANFFDTVKAIRERLSANPVPIQIPIGEGEIFAGFVDLIRMKGVIYDKDDGSTYNEVEIPHDLQNEARTWRINMLEAVSEVDETLLEKYLNGEDITEEEIRVVLRKATLNVSIIPVLCGSSFKNKGVQFMLDAVVEYLASPVDVGAVEGHHPRTEETVVREPRDEEPFAGLAFKIATDPFVGKLTFFRVYSGVLHAGSYVLNTVTGKKERIGRVLQMHSNKREDIECVYAGDIAAAVGLKDVRTGDTICDENNPVVLEKMIFPEPVIQIAIEPKTKADSDRLGMSLAKLAEEDPTFKVKTDDETGQTLIAGMGELHLEILVDRLKREFKVEATVGQPQVAYRETIRKAVEFEGKFVRQSGGKGQFGLVNLKVEPLEEGKGYEFVDAVKGGVIPREYIPAVNAGVQQAMKDGVVAGYAMQDIKVTLFDGKYHEVDSSEMAFKIAGSIGFKGAAKKADPVLLEPIMKVEVVTPDEYLGDVMGDLSSRRGHIEGMGQRAGAQFVNAKVPLSAMFGYSTDLRSMTQGRANYSMEFECYREVPRSIAESLQEKRVSKETV</sequence>
<keyword id="KW-0963">Cytoplasm</keyword>
<keyword id="KW-0251">Elongation factor</keyword>
<keyword id="KW-0342">GTP-binding</keyword>
<keyword id="KW-0547">Nucleotide-binding</keyword>
<keyword id="KW-0648">Protein biosynthesis</keyword>
<keyword id="KW-1185">Reference proteome</keyword>
<comment type="function">
    <text evidence="1">Catalyzes the GTP-dependent ribosomal translocation step during translation elongation. During this step, the ribosome changes from the pre-translocational (PRE) to the post-translocational (POST) state as the newly formed A-site-bound peptidyl-tRNA and P-site-bound deacylated tRNA move to the P and E sites, respectively. Catalyzes the coordinated movement of the two tRNA molecules, the mRNA and conformational changes in the ribosome.</text>
</comment>
<comment type="subcellular location">
    <subcellularLocation>
        <location evidence="1">Cytoplasm</location>
    </subcellularLocation>
</comment>
<comment type="similarity">
    <text evidence="1">Belongs to the TRAFAC class translation factor GTPase superfamily. Classic translation factor GTPase family. EF-G/EF-2 subfamily.</text>
</comment>
<accession>A1BJ37</accession>
<proteinExistence type="inferred from homology"/>
<protein>
    <recommendedName>
        <fullName evidence="1">Elongation factor G</fullName>
        <shortName evidence="1">EF-G</shortName>
    </recommendedName>
</protein>
<gene>
    <name evidence="1" type="primary">fusA</name>
    <name type="ordered locus">Cpha266_2426</name>
</gene>